<dbReference type="EMBL" id="AE007317">
    <property type="protein sequence ID" value="AAK99666.1"/>
    <property type="molecule type" value="Genomic_DNA"/>
</dbReference>
<dbReference type="PIR" id="F97979">
    <property type="entry name" value="F97979"/>
</dbReference>
<dbReference type="RefSeq" id="NP_358456.1">
    <property type="nucleotide sequence ID" value="NC_003098.1"/>
</dbReference>
<dbReference type="RefSeq" id="WP_001125943.1">
    <property type="nucleotide sequence ID" value="NC_003098.1"/>
</dbReference>
<dbReference type="SMR" id="P66279"/>
<dbReference type="STRING" id="171101.spr0862"/>
<dbReference type="GeneID" id="93739777"/>
<dbReference type="KEGG" id="spr:spr0862"/>
<dbReference type="PATRIC" id="fig|171101.6.peg.950"/>
<dbReference type="eggNOG" id="COG0291">
    <property type="taxonomic scope" value="Bacteria"/>
</dbReference>
<dbReference type="HOGENOM" id="CLU_169643_3_0_9"/>
<dbReference type="PRO" id="PR:P66279"/>
<dbReference type="Proteomes" id="UP000000586">
    <property type="component" value="Chromosome"/>
</dbReference>
<dbReference type="GO" id="GO:0022625">
    <property type="term" value="C:cytosolic large ribosomal subunit"/>
    <property type="evidence" value="ECO:0000318"/>
    <property type="project" value="GO_Central"/>
</dbReference>
<dbReference type="GO" id="GO:0003735">
    <property type="term" value="F:structural constituent of ribosome"/>
    <property type="evidence" value="ECO:0000318"/>
    <property type="project" value="GO_Central"/>
</dbReference>
<dbReference type="GO" id="GO:0006412">
    <property type="term" value="P:translation"/>
    <property type="evidence" value="ECO:0007669"/>
    <property type="project" value="UniProtKB-UniRule"/>
</dbReference>
<dbReference type="FunFam" id="4.10.410.60:FF:000001">
    <property type="entry name" value="50S ribosomal protein L35"/>
    <property type="match status" value="1"/>
</dbReference>
<dbReference type="Gene3D" id="4.10.410.60">
    <property type="match status" value="1"/>
</dbReference>
<dbReference type="HAMAP" id="MF_00514">
    <property type="entry name" value="Ribosomal_bL35"/>
    <property type="match status" value="1"/>
</dbReference>
<dbReference type="InterPro" id="IPR001706">
    <property type="entry name" value="Ribosomal_bL35"/>
</dbReference>
<dbReference type="InterPro" id="IPR021137">
    <property type="entry name" value="Ribosomal_bL35-like"/>
</dbReference>
<dbReference type="InterPro" id="IPR018265">
    <property type="entry name" value="Ribosomal_bL35_CS"/>
</dbReference>
<dbReference type="InterPro" id="IPR037229">
    <property type="entry name" value="Ribosomal_bL35_sf"/>
</dbReference>
<dbReference type="NCBIfam" id="TIGR00001">
    <property type="entry name" value="rpmI_bact"/>
    <property type="match status" value="1"/>
</dbReference>
<dbReference type="PANTHER" id="PTHR33343">
    <property type="entry name" value="54S RIBOSOMAL PROTEIN BL35M"/>
    <property type="match status" value="1"/>
</dbReference>
<dbReference type="PANTHER" id="PTHR33343:SF1">
    <property type="entry name" value="LARGE RIBOSOMAL SUBUNIT PROTEIN BL35M"/>
    <property type="match status" value="1"/>
</dbReference>
<dbReference type="Pfam" id="PF01632">
    <property type="entry name" value="Ribosomal_L35p"/>
    <property type="match status" value="1"/>
</dbReference>
<dbReference type="PRINTS" id="PR00064">
    <property type="entry name" value="RIBOSOMALL35"/>
</dbReference>
<dbReference type="SUPFAM" id="SSF143034">
    <property type="entry name" value="L35p-like"/>
    <property type="match status" value="1"/>
</dbReference>
<dbReference type="PROSITE" id="PS00936">
    <property type="entry name" value="RIBOSOMAL_L35"/>
    <property type="match status" value="1"/>
</dbReference>
<organism>
    <name type="scientific">Streptococcus pneumoniae (strain ATCC BAA-255 / R6)</name>
    <dbReference type="NCBI Taxonomy" id="171101"/>
    <lineage>
        <taxon>Bacteria</taxon>
        <taxon>Bacillati</taxon>
        <taxon>Bacillota</taxon>
        <taxon>Bacilli</taxon>
        <taxon>Lactobacillales</taxon>
        <taxon>Streptococcaceae</taxon>
        <taxon>Streptococcus</taxon>
    </lineage>
</organism>
<keyword id="KW-1185">Reference proteome</keyword>
<keyword id="KW-0687">Ribonucleoprotein</keyword>
<keyword id="KW-0689">Ribosomal protein</keyword>
<reference key="1">
    <citation type="journal article" date="2001" name="J. Bacteriol.">
        <title>Genome of the bacterium Streptococcus pneumoniae strain R6.</title>
        <authorList>
            <person name="Hoskins J."/>
            <person name="Alborn W.E. Jr."/>
            <person name="Arnold J."/>
            <person name="Blaszczak L.C."/>
            <person name="Burgett S."/>
            <person name="DeHoff B.S."/>
            <person name="Estrem S.T."/>
            <person name="Fritz L."/>
            <person name="Fu D.-J."/>
            <person name="Fuller W."/>
            <person name="Geringer C."/>
            <person name="Gilmour R."/>
            <person name="Glass J.S."/>
            <person name="Khoja H."/>
            <person name="Kraft A.R."/>
            <person name="Lagace R.E."/>
            <person name="LeBlanc D.J."/>
            <person name="Lee L.N."/>
            <person name="Lefkowitz E.J."/>
            <person name="Lu J."/>
            <person name="Matsushima P."/>
            <person name="McAhren S.M."/>
            <person name="McHenney M."/>
            <person name="McLeaster K."/>
            <person name="Mundy C.W."/>
            <person name="Nicas T.I."/>
            <person name="Norris F.H."/>
            <person name="O'Gara M."/>
            <person name="Peery R.B."/>
            <person name="Robertson G.T."/>
            <person name="Rockey P."/>
            <person name="Sun P.-M."/>
            <person name="Winkler M.E."/>
            <person name="Yang Y."/>
            <person name="Young-Bellido M."/>
            <person name="Zhao G."/>
            <person name="Zook C.A."/>
            <person name="Baltz R.H."/>
            <person name="Jaskunas S.R."/>
            <person name="Rosteck P.R. Jr."/>
            <person name="Skatrud P.L."/>
            <person name="Glass J.I."/>
        </authorList>
    </citation>
    <scope>NUCLEOTIDE SEQUENCE [LARGE SCALE GENOMIC DNA]</scope>
    <source>
        <strain>ATCC BAA-255 / R6</strain>
    </source>
</reference>
<name>RL35_STRR6</name>
<comment type="similarity">
    <text evidence="1">Belongs to the bacterial ribosomal protein bL35 family.</text>
</comment>
<gene>
    <name evidence="1" type="primary">rpmI</name>
    <name type="ordered locus">spr0862</name>
</gene>
<sequence>MPKQKTHRASAKRFKRTGSGGLKRFRAYTSHRFHGKTKKQRRHLRKASMVHSGDYKRIKAMLTRLK</sequence>
<feature type="chain" id="PRO_0000177433" description="Large ribosomal subunit protein bL35">
    <location>
        <begin position="1"/>
        <end position="66"/>
    </location>
</feature>
<feature type="region of interest" description="Disordered" evidence="2">
    <location>
        <begin position="1"/>
        <end position="21"/>
    </location>
</feature>
<feature type="compositionally biased region" description="Basic residues" evidence="2">
    <location>
        <begin position="1"/>
        <end position="16"/>
    </location>
</feature>
<evidence type="ECO:0000255" key="1">
    <source>
        <dbReference type="HAMAP-Rule" id="MF_00514"/>
    </source>
</evidence>
<evidence type="ECO:0000256" key="2">
    <source>
        <dbReference type="SAM" id="MobiDB-lite"/>
    </source>
</evidence>
<evidence type="ECO:0000305" key="3"/>
<proteinExistence type="inferred from homology"/>
<accession>P66279</accession>
<accession>Q97R69</accession>
<protein>
    <recommendedName>
        <fullName evidence="1">Large ribosomal subunit protein bL35</fullName>
    </recommendedName>
    <alternativeName>
        <fullName evidence="3">50S ribosomal protein L35</fullName>
    </alternativeName>
</protein>